<dbReference type="EMBL" id="CU329672">
    <property type="protein sequence ID" value="CAA21107.2"/>
    <property type="molecule type" value="Genomic_DNA"/>
</dbReference>
<dbReference type="EMBL" id="D89171">
    <property type="protein sequence ID" value="BAA13833.1"/>
    <property type="status" value="ALT_FRAME"/>
    <property type="molecule type" value="mRNA"/>
</dbReference>
<dbReference type="PIR" id="T40877">
    <property type="entry name" value="T40877"/>
</dbReference>
<dbReference type="PIR" id="T42536">
    <property type="entry name" value="T42536"/>
</dbReference>
<dbReference type="SMR" id="O74840"/>
<dbReference type="BioGRID" id="275864">
    <property type="interactions" value="9"/>
</dbReference>
<dbReference type="STRING" id="284812.O74840"/>
<dbReference type="iPTMnet" id="O74840"/>
<dbReference type="PaxDb" id="4896-SPCC1235.03.1"/>
<dbReference type="EnsemblFungi" id="SPCC1235.03.1">
    <property type="protein sequence ID" value="SPCC1235.03.1:pep"/>
    <property type="gene ID" value="SPCC1235.03"/>
</dbReference>
<dbReference type="KEGG" id="spo:2539296"/>
<dbReference type="PomBase" id="SPCC1235.03"/>
<dbReference type="VEuPathDB" id="FungiDB:SPCC1235.03"/>
<dbReference type="eggNOG" id="KOG2401">
    <property type="taxonomic scope" value="Eukaryota"/>
</dbReference>
<dbReference type="HOGENOM" id="CLU_543104_0_0_1"/>
<dbReference type="InParanoid" id="O74840"/>
<dbReference type="OMA" id="ELENEYC"/>
<dbReference type="PRO" id="PR:O74840"/>
<dbReference type="Proteomes" id="UP000002485">
    <property type="component" value="Chromosome III"/>
</dbReference>
<dbReference type="GO" id="GO:0005737">
    <property type="term" value="C:cytoplasm"/>
    <property type="evidence" value="ECO:0000305"/>
    <property type="project" value="PomBase"/>
</dbReference>
<dbReference type="GO" id="GO:0005730">
    <property type="term" value="C:nucleolus"/>
    <property type="evidence" value="ECO:0007005"/>
    <property type="project" value="PomBase"/>
</dbReference>
<dbReference type="GO" id="GO:0005634">
    <property type="term" value="C:nucleus"/>
    <property type="evidence" value="ECO:0007005"/>
    <property type="project" value="PomBase"/>
</dbReference>
<dbReference type="GO" id="GO:0004519">
    <property type="term" value="F:endonuclease activity"/>
    <property type="evidence" value="ECO:0000266"/>
    <property type="project" value="PomBase"/>
</dbReference>
<dbReference type="GO" id="GO:0070966">
    <property type="term" value="P:nuclear-transcribed mRNA catabolic process, no-go decay"/>
    <property type="evidence" value="ECO:0000266"/>
    <property type="project" value="PomBase"/>
</dbReference>
<dbReference type="Gene3D" id="3.30.1370.110">
    <property type="match status" value="1"/>
</dbReference>
<dbReference type="InterPro" id="IPR052772">
    <property type="entry name" value="Endo/PolyKinase_Domain-Protein"/>
</dbReference>
<dbReference type="InterPro" id="IPR002625">
    <property type="entry name" value="Smr_dom"/>
</dbReference>
<dbReference type="InterPro" id="IPR036063">
    <property type="entry name" value="Smr_dom_sf"/>
</dbReference>
<dbReference type="PANTHER" id="PTHR46535">
    <property type="entry name" value="NEDD4-BINDING PROTEIN 2"/>
    <property type="match status" value="1"/>
</dbReference>
<dbReference type="PANTHER" id="PTHR46535:SF1">
    <property type="entry name" value="NEDD4-BINDING PROTEIN 2"/>
    <property type="match status" value="1"/>
</dbReference>
<dbReference type="SMART" id="SM00463">
    <property type="entry name" value="SMR"/>
    <property type="match status" value="1"/>
</dbReference>
<dbReference type="SUPFAM" id="SSF160443">
    <property type="entry name" value="SMR domain-like"/>
    <property type="match status" value="1"/>
</dbReference>
<dbReference type="PROSITE" id="PS50828">
    <property type="entry name" value="SMR"/>
    <property type="match status" value="1"/>
</dbReference>
<protein>
    <recommendedName>
        <fullName>Smr domain-containing protein C1235.03</fullName>
    </recommendedName>
</protein>
<proteinExistence type="evidence at transcript level"/>
<gene>
    <name type="ORF">SPCC1235.03</name>
</gene>
<reference key="1">
    <citation type="journal article" date="2002" name="Nature">
        <title>The genome sequence of Schizosaccharomyces pombe.</title>
        <authorList>
            <person name="Wood V."/>
            <person name="Gwilliam R."/>
            <person name="Rajandream M.A."/>
            <person name="Lyne M.H."/>
            <person name="Lyne R."/>
            <person name="Stewart A."/>
            <person name="Sgouros J.G."/>
            <person name="Peat N."/>
            <person name="Hayles J."/>
            <person name="Baker S.G."/>
            <person name="Basham D."/>
            <person name="Bowman S."/>
            <person name="Brooks K."/>
            <person name="Brown D."/>
            <person name="Brown S."/>
            <person name="Chillingworth T."/>
            <person name="Churcher C.M."/>
            <person name="Collins M."/>
            <person name="Connor R."/>
            <person name="Cronin A."/>
            <person name="Davis P."/>
            <person name="Feltwell T."/>
            <person name="Fraser A."/>
            <person name="Gentles S."/>
            <person name="Goble A."/>
            <person name="Hamlin N."/>
            <person name="Harris D.E."/>
            <person name="Hidalgo J."/>
            <person name="Hodgson G."/>
            <person name="Holroyd S."/>
            <person name="Hornsby T."/>
            <person name="Howarth S."/>
            <person name="Huckle E.J."/>
            <person name="Hunt S."/>
            <person name="Jagels K."/>
            <person name="James K.D."/>
            <person name="Jones L."/>
            <person name="Jones M."/>
            <person name="Leather S."/>
            <person name="McDonald S."/>
            <person name="McLean J."/>
            <person name="Mooney P."/>
            <person name="Moule S."/>
            <person name="Mungall K.L."/>
            <person name="Murphy L.D."/>
            <person name="Niblett D."/>
            <person name="Odell C."/>
            <person name="Oliver K."/>
            <person name="O'Neil S."/>
            <person name="Pearson D."/>
            <person name="Quail M.A."/>
            <person name="Rabbinowitsch E."/>
            <person name="Rutherford K.M."/>
            <person name="Rutter S."/>
            <person name="Saunders D."/>
            <person name="Seeger K."/>
            <person name="Sharp S."/>
            <person name="Skelton J."/>
            <person name="Simmonds M.N."/>
            <person name="Squares R."/>
            <person name="Squares S."/>
            <person name="Stevens K."/>
            <person name="Taylor K."/>
            <person name="Taylor R.G."/>
            <person name="Tivey A."/>
            <person name="Walsh S.V."/>
            <person name="Warren T."/>
            <person name="Whitehead S."/>
            <person name="Woodward J.R."/>
            <person name="Volckaert G."/>
            <person name="Aert R."/>
            <person name="Robben J."/>
            <person name="Grymonprez B."/>
            <person name="Weltjens I."/>
            <person name="Vanstreels E."/>
            <person name="Rieger M."/>
            <person name="Schaefer M."/>
            <person name="Mueller-Auer S."/>
            <person name="Gabel C."/>
            <person name="Fuchs M."/>
            <person name="Duesterhoeft A."/>
            <person name="Fritzc C."/>
            <person name="Holzer E."/>
            <person name="Moestl D."/>
            <person name="Hilbert H."/>
            <person name="Borzym K."/>
            <person name="Langer I."/>
            <person name="Beck A."/>
            <person name="Lehrach H."/>
            <person name="Reinhardt R."/>
            <person name="Pohl T.M."/>
            <person name="Eger P."/>
            <person name="Zimmermann W."/>
            <person name="Wedler H."/>
            <person name="Wambutt R."/>
            <person name="Purnelle B."/>
            <person name="Goffeau A."/>
            <person name="Cadieu E."/>
            <person name="Dreano S."/>
            <person name="Gloux S."/>
            <person name="Lelaure V."/>
            <person name="Mottier S."/>
            <person name="Galibert F."/>
            <person name="Aves S.J."/>
            <person name="Xiang Z."/>
            <person name="Hunt C."/>
            <person name="Moore K."/>
            <person name="Hurst S.M."/>
            <person name="Lucas M."/>
            <person name="Rochet M."/>
            <person name="Gaillardin C."/>
            <person name="Tallada V.A."/>
            <person name="Garzon A."/>
            <person name="Thode G."/>
            <person name="Daga R.R."/>
            <person name="Cruzado L."/>
            <person name="Jimenez J."/>
            <person name="Sanchez M."/>
            <person name="del Rey F."/>
            <person name="Benito J."/>
            <person name="Dominguez A."/>
            <person name="Revuelta J.L."/>
            <person name="Moreno S."/>
            <person name="Armstrong J."/>
            <person name="Forsburg S.L."/>
            <person name="Cerutti L."/>
            <person name="Lowe T."/>
            <person name="McCombie W.R."/>
            <person name="Paulsen I."/>
            <person name="Potashkin J."/>
            <person name="Shpakovski G.V."/>
            <person name="Ussery D."/>
            <person name="Barrell B.G."/>
            <person name="Nurse P."/>
        </authorList>
    </citation>
    <scope>NUCLEOTIDE SEQUENCE [LARGE SCALE GENOMIC DNA]</scope>
    <source>
        <strain>972 / ATCC 24843</strain>
    </source>
</reference>
<reference key="2">
    <citation type="journal article" date="2011" name="Science">
        <title>Comparative functional genomics of the fission yeasts.</title>
        <authorList>
            <person name="Rhind N."/>
            <person name="Chen Z."/>
            <person name="Yassour M."/>
            <person name="Thompson D.A."/>
            <person name="Haas B.J."/>
            <person name="Habib N."/>
            <person name="Wapinski I."/>
            <person name="Roy S."/>
            <person name="Lin M.F."/>
            <person name="Heiman D.I."/>
            <person name="Young S.K."/>
            <person name="Furuya K."/>
            <person name="Guo Y."/>
            <person name="Pidoux A."/>
            <person name="Chen H.M."/>
            <person name="Robbertse B."/>
            <person name="Goldberg J.M."/>
            <person name="Aoki K."/>
            <person name="Bayne E.H."/>
            <person name="Berlin A.M."/>
            <person name="Desjardins C.A."/>
            <person name="Dobbs E."/>
            <person name="Dukaj L."/>
            <person name="Fan L."/>
            <person name="FitzGerald M.G."/>
            <person name="French C."/>
            <person name="Gujja S."/>
            <person name="Hansen K."/>
            <person name="Keifenheim D."/>
            <person name="Levin J.Z."/>
            <person name="Mosher R.A."/>
            <person name="Mueller C.A."/>
            <person name="Pfiffner J."/>
            <person name="Priest M."/>
            <person name="Russ C."/>
            <person name="Smialowska A."/>
            <person name="Swoboda P."/>
            <person name="Sykes S.M."/>
            <person name="Vaughn M."/>
            <person name="Vengrova S."/>
            <person name="Yoder R."/>
            <person name="Zeng Q."/>
            <person name="Allshire R."/>
            <person name="Baulcombe D."/>
            <person name="Birren B.W."/>
            <person name="Brown W."/>
            <person name="Ekwall K."/>
            <person name="Kellis M."/>
            <person name="Leatherwood J."/>
            <person name="Levin H."/>
            <person name="Margalit H."/>
            <person name="Martienssen R."/>
            <person name="Nieduszynski C.A."/>
            <person name="Spatafora J.W."/>
            <person name="Friedman N."/>
            <person name="Dalgaard J.Z."/>
            <person name="Baumann P."/>
            <person name="Niki H."/>
            <person name="Regev A."/>
            <person name="Nusbaum C."/>
        </authorList>
    </citation>
    <scope>REVISION OF GENE MODEL</scope>
</reference>
<reference key="3">
    <citation type="journal article" date="1997" name="DNA Res.">
        <title>Identification of open reading frames in Schizosaccharomyces pombe cDNAs.</title>
        <authorList>
            <person name="Yoshioka S."/>
            <person name="Kato K."/>
            <person name="Nakai K."/>
            <person name="Okayama H."/>
            <person name="Nojima H."/>
        </authorList>
    </citation>
    <scope>NUCLEOTIDE SEQUENCE [LARGE SCALE MRNA] OF 181-502</scope>
    <source>
        <strain>PR745</strain>
    </source>
</reference>
<reference key="4">
    <citation type="journal article" date="2006" name="Nat. Biotechnol.">
        <title>ORFeome cloning and global analysis of protein localization in the fission yeast Schizosaccharomyces pombe.</title>
        <authorList>
            <person name="Matsuyama A."/>
            <person name="Arai R."/>
            <person name="Yashiroda Y."/>
            <person name="Shirai A."/>
            <person name="Kamata A."/>
            <person name="Sekido S."/>
            <person name="Kobayashi Y."/>
            <person name="Hashimoto A."/>
            <person name="Hamamoto M."/>
            <person name="Hiraoka Y."/>
            <person name="Horinouchi S."/>
            <person name="Yoshida M."/>
        </authorList>
    </citation>
    <scope>SUBCELLULAR LOCATION [LARGE SCALE ANALYSIS]</scope>
</reference>
<evidence type="ECO:0000255" key="1">
    <source>
        <dbReference type="PROSITE-ProRule" id="PRU00321"/>
    </source>
</evidence>
<evidence type="ECO:0000256" key="2">
    <source>
        <dbReference type="SAM" id="MobiDB-lite"/>
    </source>
</evidence>
<evidence type="ECO:0000269" key="3">
    <source>
    </source>
</evidence>
<evidence type="ECO:0000305" key="4"/>
<feature type="chain" id="PRO_0000116560" description="Smr domain-containing protein C1235.03">
    <location>
        <begin position="1"/>
        <end position="502"/>
    </location>
</feature>
<feature type="domain" description="Smr" evidence="1">
    <location>
        <begin position="411"/>
        <end position="459"/>
    </location>
</feature>
<feature type="region of interest" description="Disordered" evidence="2">
    <location>
        <begin position="150"/>
        <end position="184"/>
    </location>
</feature>
<feature type="compositionally biased region" description="Basic residues" evidence="2">
    <location>
        <begin position="157"/>
        <end position="171"/>
    </location>
</feature>
<feature type="sequence conflict" description="In Ref. 3; BAA13833." evidence="4" ref="3">
    <original>T</original>
    <variation>I</variation>
    <location>
        <position position="322"/>
    </location>
</feature>
<feature type="sequence conflict" description="In Ref. 3; BAA13833." evidence="4" ref="3">
    <original>E</original>
    <variation>G</variation>
    <location>
        <position position="428"/>
    </location>
</feature>
<feature type="sequence conflict" description="In Ref. 3; BAA13833." evidence="4" ref="3">
    <original>G</original>
    <variation>S</variation>
    <location>
        <position position="485"/>
    </location>
</feature>
<organism>
    <name type="scientific">Schizosaccharomyces pombe (strain 972 / ATCC 24843)</name>
    <name type="common">Fission yeast</name>
    <dbReference type="NCBI Taxonomy" id="284812"/>
    <lineage>
        <taxon>Eukaryota</taxon>
        <taxon>Fungi</taxon>
        <taxon>Dikarya</taxon>
        <taxon>Ascomycota</taxon>
        <taxon>Taphrinomycotina</taxon>
        <taxon>Schizosaccharomycetes</taxon>
        <taxon>Schizosaccharomycetales</taxon>
        <taxon>Schizosaccharomycetaceae</taxon>
        <taxon>Schizosaccharomyces</taxon>
    </lineage>
</organism>
<name>YCY3_SCHPO</name>
<accession>O74840</accession>
<accession>P78823</accession>
<comment type="subcellular location">
    <subcellularLocation>
        <location evidence="3">Nucleus</location>
        <location evidence="3">Nucleolus</location>
    </subcellularLocation>
</comment>
<comment type="sequence caution" evidence="4">
    <conflict type="frameshift">
        <sequence resource="EMBL-CDS" id="BAA13833"/>
    </conflict>
</comment>
<sequence length="502" mass="57496">MQDWRAALEEYYSRYLDSALVLAIVNDSDDSNTAREILEALSIESQCDSHEEHWDNLRRDEQELLNLKTLDEEINKIDEEDFTWELKDSSLELDPDVYNFLRSMFSDLSAARVQLVQAKCQNDLVRSSDELLNHRAIQESEQIETAADALITSNIGHRSRQRKKKTKKATNSRKPLSKFQSNTEEVNEDPILKPSLSVWENNRLLIEKLTSILNIPSSQINHEFYKNSSAWPITIRNLIHRHQPLSNITNNELMKYQEEATQLAKDTGLSLKICTDVLICSNDYKNALWILCLIKETQHNEMGNIKLSSQTAKSNSSTQTKTCLNDQSSKLVEDDEALSAEDCNRLAEEYLELRNMQYSNSAKEYRRSKSNHLFGGSAMYHAQLGREYHEKALKYRSLAMRSLAHSGTSHSLDLHGATVREAKTIVRERVAAWWAKEADTSPNSIRPFVIVTGRGNHSIGLEARLLPAIVRLLQQDHWRFDAEHGQITVYGINRHSKLNSNA</sequence>
<keyword id="KW-0539">Nucleus</keyword>
<keyword id="KW-1185">Reference proteome</keyword>